<proteinExistence type="evidence at protein level"/>
<organism>
    <name type="scientific">Arabidopsis thaliana</name>
    <name type="common">Mouse-ear cress</name>
    <dbReference type="NCBI Taxonomy" id="3702"/>
    <lineage>
        <taxon>Eukaryota</taxon>
        <taxon>Viridiplantae</taxon>
        <taxon>Streptophyta</taxon>
        <taxon>Embryophyta</taxon>
        <taxon>Tracheophyta</taxon>
        <taxon>Spermatophyta</taxon>
        <taxon>Magnoliopsida</taxon>
        <taxon>eudicotyledons</taxon>
        <taxon>Gunneridae</taxon>
        <taxon>Pentapetalae</taxon>
        <taxon>rosids</taxon>
        <taxon>malvids</taxon>
        <taxon>Brassicales</taxon>
        <taxon>Brassicaceae</taxon>
        <taxon>Camelineae</taxon>
        <taxon>Arabidopsis</taxon>
    </lineage>
</organism>
<protein>
    <recommendedName>
        <fullName evidence="9">Uridylate kinase PUMPKIN, chloroplastic</fullName>
        <ecNumber evidence="5">2.7.4.22</ecNumber>
    </recommendedName>
    <alternativeName>
        <fullName evidence="7">Plastid UMP kinase</fullName>
    </alternativeName>
    <alternativeName>
        <fullName evidence="6">Protein DEFECT IN PSAA/B TRANSCRIPT ACCUMULATION 1</fullName>
    </alternativeName>
    <alternativeName>
        <fullName evidence="1">Uridine monophosphate kinase</fullName>
        <shortName evidence="1">UMP kinase</shortName>
        <shortName evidence="1">UMPK</shortName>
    </alternativeName>
</protein>
<dbReference type="EC" id="2.7.4.22" evidence="5"/>
<dbReference type="EMBL" id="AB026654">
    <property type="protein sequence ID" value="BAB01794.1"/>
    <property type="molecule type" value="Genomic_DNA"/>
</dbReference>
<dbReference type="EMBL" id="CP002686">
    <property type="protein sequence ID" value="AEE76131.1"/>
    <property type="molecule type" value="Genomic_DNA"/>
</dbReference>
<dbReference type="EMBL" id="AY050828">
    <property type="protein sequence ID" value="AAK92763.1"/>
    <property type="molecule type" value="mRNA"/>
</dbReference>
<dbReference type="EMBL" id="AY091161">
    <property type="protein sequence ID" value="AAM14100.1"/>
    <property type="molecule type" value="mRNA"/>
</dbReference>
<dbReference type="RefSeq" id="NP_188498.1">
    <property type="nucleotide sequence ID" value="NM_112754.3"/>
</dbReference>
<dbReference type="SMR" id="Q9LSA9"/>
<dbReference type="FunCoup" id="Q9LSA9">
    <property type="interactions" value="857"/>
</dbReference>
<dbReference type="IntAct" id="Q9LSA9">
    <property type="interactions" value="1"/>
</dbReference>
<dbReference type="iPTMnet" id="Q9LSA9"/>
<dbReference type="PaxDb" id="3702-AT3G18680.1"/>
<dbReference type="ProMEX" id="Q9LSA9"/>
<dbReference type="ProteomicsDB" id="189552"/>
<dbReference type="EnsemblPlants" id="AT3G18680.1">
    <property type="protein sequence ID" value="AT3G18680.1"/>
    <property type="gene ID" value="AT3G18680"/>
</dbReference>
<dbReference type="GeneID" id="821399"/>
<dbReference type="Gramene" id="AT3G18680.1">
    <property type="protein sequence ID" value="AT3G18680.1"/>
    <property type="gene ID" value="AT3G18680"/>
</dbReference>
<dbReference type="KEGG" id="ath:AT3G18680"/>
<dbReference type="Araport" id="AT3G18680"/>
<dbReference type="TAIR" id="AT3G18680">
    <property type="gene designation" value="PUMPKIN"/>
</dbReference>
<dbReference type="eggNOG" id="ENOG502QVYQ">
    <property type="taxonomic scope" value="Eukaryota"/>
</dbReference>
<dbReference type="HOGENOM" id="CLU_033861_4_0_1"/>
<dbReference type="InParanoid" id="Q9LSA9"/>
<dbReference type="OMA" id="LMGDKQF"/>
<dbReference type="PhylomeDB" id="Q9LSA9"/>
<dbReference type="UniPathway" id="UPA00159">
    <property type="reaction ID" value="UER00275"/>
</dbReference>
<dbReference type="PRO" id="PR:Q9LSA9"/>
<dbReference type="Proteomes" id="UP000006548">
    <property type="component" value="Chromosome 3"/>
</dbReference>
<dbReference type="ExpressionAtlas" id="Q9LSA9">
    <property type="expression patterns" value="baseline and differential"/>
</dbReference>
<dbReference type="GO" id="GO:0009507">
    <property type="term" value="C:chloroplast"/>
    <property type="evidence" value="ECO:0000314"/>
    <property type="project" value="TAIR"/>
</dbReference>
<dbReference type="GO" id="GO:0009570">
    <property type="term" value="C:chloroplast stroma"/>
    <property type="evidence" value="ECO:0000314"/>
    <property type="project" value="UniProtKB"/>
</dbReference>
<dbReference type="GO" id="GO:0005524">
    <property type="term" value="F:ATP binding"/>
    <property type="evidence" value="ECO:0007669"/>
    <property type="project" value="UniProtKB-KW"/>
</dbReference>
<dbReference type="GO" id="GO:0003723">
    <property type="term" value="F:RNA binding"/>
    <property type="evidence" value="ECO:0000353"/>
    <property type="project" value="TAIR"/>
</dbReference>
<dbReference type="GO" id="GO:1990825">
    <property type="term" value="F:sequence-specific mRNA binding"/>
    <property type="evidence" value="ECO:0000314"/>
    <property type="project" value="UniProtKB"/>
</dbReference>
<dbReference type="GO" id="GO:0033862">
    <property type="term" value="F:UMP kinase activity"/>
    <property type="evidence" value="ECO:0000314"/>
    <property type="project" value="TAIR"/>
</dbReference>
<dbReference type="GO" id="GO:0044210">
    <property type="term" value="P:'de novo' CTP biosynthetic process"/>
    <property type="evidence" value="ECO:0007669"/>
    <property type="project" value="UniProtKB-UniPathway"/>
</dbReference>
<dbReference type="GO" id="GO:0009658">
    <property type="term" value="P:chloroplast organization"/>
    <property type="evidence" value="ECO:0000315"/>
    <property type="project" value="UniProtKB"/>
</dbReference>
<dbReference type="GO" id="GO:0031425">
    <property type="term" value="P:chloroplast RNA processing"/>
    <property type="evidence" value="ECO:0000315"/>
    <property type="project" value="UniProtKB"/>
</dbReference>
<dbReference type="GO" id="GO:0042548">
    <property type="term" value="P:regulation of photosynthesis, light reaction"/>
    <property type="evidence" value="ECO:0000315"/>
    <property type="project" value="UniProtKB"/>
</dbReference>
<dbReference type="GO" id="GO:0009416">
    <property type="term" value="P:response to light stimulus"/>
    <property type="evidence" value="ECO:0000270"/>
    <property type="project" value="UniProtKB"/>
</dbReference>
<dbReference type="CDD" id="cd04254">
    <property type="entry name" value="AAK_UMPK-PyrH-Ec"/>
    <property type="match status" value="1"/>
</dbReference>
<dbReference type="FunFam" id="3.40.1160.10:FF:000001">
    <property type="entry name" value="Uridylate kinase"/>
    <property type="match status" value="1"/>
</dbReference>
<dbReference type="Gene3D" id="3.40.1160.10">
    <property type="entry name" value="Acetylglutamate kinase-like"/>
    <property type="match status" value="1"/>
</dbReference>
<dbReference type="HAMAP" id="MF_01220_B">
    <property type="entry name" value="PyrH_B"/>
    <property type="match status" value="1"/>
</dbReference>
<dbReference type="InterPro" id="IPR036393">
    <property type="entry name" value="AceGlu_kinase-like_sf"/>
</dbReference>
<dbReference type="InterPro" id="IPR001048">
    <property type="entry name" value="Asp/Glu/Uridylate_kinase"/>
</dbReference>
<dbReference type="InterPro" id="IPR015963">
    <property type="entry name" value="Uridylate_kinase_bac"/>
</dbReference>
<dbReference type="NCBIfam" id="TIGR02075">
    <property type="entry name" value="pyrH_bact"/>
    <property type="match status" value="1"/>
</dbReference>
<dbReference type="PANTHER" id="PTHR42833">
    <property type="entry name" value="URIDYLATE KINASE"/>
    <property type="match status" value="1"/>
</dbReference>
<dbReference type="PANTHER" id="PTHR42833:SF4">
    <property type="entry name" value="URIDYLATE KINASE PUMPKIN, CHLOROPLASTIC"/>
    <property type="match status" value="1"/>
</dbReference>
<dbReference type="Pfam" id="PF00696">
    <property type="entry name" value="AA_kinase"/>
    <property type="match status" value="1"/>
</dbReference>
<dbReference type="SUPFAM" id="SSF53633">
    <property type="entry name" value="Carbamate kinase-like"/>
    <property type="match status" value="1"/>
</dbReference>
<comment type="function">
    <text evidence="4 5">Catalyzes the reversible phosphorylation of UMP to UDP (PubMed:30409856). Required for specific post-transcriptional processes of many plastid transcripts (e.g. PSI (PsaA, PsaF), PSII (D1, CP43, CP47), Cytochrome b(6)f (Cytb(6)), ATP synthase (AtpC), LHCs (LHCa3, LHCb2), and NDH (NdhH)), thus being essential for retaining photosynthetic activity in chloroplasts (PubMed:19037728, PubMed:30409856). Associates with group II introns of the plastid transcripts trnG-UCC, trnV-UAC, petB, petD and ndhA to stabilize corresponding precursor RNAs (PubMed:30409856).</text>
</comment>
<comment type="catalytic activity">
    <reaction evidence="5">
        <text>UMP + ATP = UDP + ADP</text>
        <dbReference type="Rhea" id="RHEA:24400"/>
        <dbReference type="ChEBI" id="CHEBI:30616"/>
        <dbReference type="ChEBI" id="CHEBI:57865"/>
        <dbReference type="ChEBI" id="CHEBI:58223"/>
        <dbReference type="ChEBI" id="CHEBI:456216"/>
        <dbReference type="EC" id="2.7.4.22"/>
    </reaction>
    <physiologicalReaction direction="left-to-right" evidence="5">
        <dbReference type="Rhea" id="RHEA:24401"/>
    </physiologicalReaction>
</comment>
<comment type="biophysicochemical properties">
    <kinetics>
        <KM evidence="5">0.03 mM for UMP</KM>
        <KM evidence="5">0.17 mM for ATP</KM>
    </kinetics>
</comment>
<comment type="pathway">
    <text evidence="5">Pyrimidine metabolism; CTP biosynthesis via de novo pathway; UDP from UMP (UMPK route): step 1/1.</text>
</comment>
<comment type="subunit">
    <text evidence="1 5">Homomultimer (PubMed:30409856). Homohexamer (By similarity). Forms RNA-containing megadalton-sized complexes (PubMed:30409856).</text>
</comment>
<comment type="subcellular location">
    <subcellularLocation>
        <location evidence="4 5">Plastid</location>
        <location evidence="4 5">Chloroplast stroma</location>
    </subcellularLocation>
</comment>
<comment type="tissue specificity">
    <text evidence="4">Expressed exclusively in leaves, but not in roots.</text>
</comment>
<comment type="induction">
    <text evidence="4">Induced by light, detected at low levels in etiolated seedlings.</text>
</comment>
<comment type="disruption phenotype">
    <text evidence="4 5">Reduced capacity to grow photoautotrophically associated with low levels of many plastid transcripts (e.g. PSI (PsaA, PsaF), PSII (D1, CP43, CP47), Cytochrome b(6)f (Cytb(6)), ATP synthase (AtpC), LHCs (LHCa3, LHCb2), and NDH (NdhH)) but abnormal accumulation of others, altered plastid translation as well as a strongly affected plastid ultrastructure (e.g. almost absent stromal lamellae and swollen grana stacks) with a large number of plastoglobuli and reduced photosynthetic performance due to strong defects in the major complexes of the thylakoid membrane.</text>
</comment>
<comment type="similarity">
    <text evidence="8">Belongs to the UMP kinase family.</text>
</comment>
<gene>
    <name evidence="7" type="primary">PUMPKIN</name>
    <name evidence="6" type="synonym">DPT1</name>
    <name evidence="10" type="ordered locus">At3g18680</name>
</gene>
<accession>Q9LSA9</accession>
<sequence length="339" mass="36263">MAIPLPLTSCSPISTSSSISRTSFVPLTLRNRTFFSNQNYSRRVLISCSSSLSSDNGSSPDSMNGNGNGNGSSLNGQSSFPRLPSFDGTSKPPLKWRRVLLKVSGEALAGDEEQNIDPKVTMAIAREVAAVTRLGIEVAIVVGGGNIFRGSTWAGCSGLDRSSADYIGMLATVMNAIFLQATMESIGIPTRVQTAFRMSEVAEPYIRRRAIRHLEKGRVVIFAAGTGNPFFTTDTAAALRCAEINAEVVLKATNVDGVFDDDPKRNPNARLLDSLTYQEVTSKDLSVMDMTAITLCQENNIPVVVFNLSEPGNIAKAIKGERVGTLIGGTWNSIVTTTS</sequence>
<keyword id="KW-0067">ATP-binding</keyword>
<keyword id="KW-0150">Chloroplast</keyword>
<keyword id="KW-0418">Kinase</keyword>
<keyword id="KW-0547">Nucleotide-binding</keyword>
<keyword id="KW-0934">Plastid</keyword>
<keyword id="KW-0665">Pyrimidine biosynthesis</keyword>
<keyword id="KW-1185">Reference proteome</keyword>
<keyword id="KW-0694">RNA-binding</keyword>
<keyword id="KW-0808">Transferase</keyword>
<keyword id="KW-0809">Transit peptide</keyword>
<name>PUMPK_ARATH</name>
<evidence type="ECO:0000250" key="1">
    <source>
        <dbReference type="UniProtKB" id="P0A7E9"/>
    </source>
</evidence>
<evidence type="ECO:0000255" key="2"/>
<evidence type="ECO:0000256" key="3">
    <source>
        <dbReference type="SAM" id="MobiDB-lite"/>
    </source>
</evidence>
<evidence type="ECO:0000269" key="4">
    <source>
    </source>
</evidence>
<evidence type="ECO:0000269" key="5">
    <source>
    </source>
</evidence>
<evidence type="ECO:0000303" key="6">
    <source>
    </source>
</evidence>
<evidence type="ECO:0000303" key="7">
    <source>
    </source>
</evidence>
<evidence type="ECO:0000305" key="8"/>
<evidence type="ECO:0000305" key="9">
    <source>
    </source>
</evidence>
<evidence type="ECO:0000312" key="10">
    <source>
        <dbReference type="EMBL" id="AEE76131.1"/>
    </source>
</evidence>
<feature type="transit peptide" description="Chloroplast" evidence="2">
    <location>
        <begin position="1"/>
        <end position="53"/>
    </location>
</feature>
<feature type="chain" id="PRO_0000454293" description="Uridylate kinase PUMPKIN, chloroplastic">
    <location>
        <begin position="54"/>
        <end position="339"/>
    </location>
</feature>
<feature type="region of interest" description="Disordered" evidence="3">
    <location>
        <begin position="52"/>
        <end position="89"/>
    </location>
</feature>
<feature type="region of interest" description="Involved in allosteric activation by GTP" evidence="2">
    <location>
        <begin position="110"/>
        <end position="115"/>
    </location>
</feature>
<feature type="compositionally biased region" description="Low complexity" evidence="3">
    <location>
        <begin position="52"/>
        <end position="79"/>
    </location>
</feature>
<feature type="binding site" evidence="1">
    <location>
        <begin position="102"/>
        <end position="105"/>
    </location>
    <ligand>
        <name>ATP</name>
        <dbReference type="ChEBI" id="CHEBI:30616"/>
    </ligand>
</feature>
<feature type="binding site" evidence="1">
    <location>
        <position position="144"/>
    </location>
    <ligand>
        <name>UMP</name>
        <dbReference type="ChEBI" id="CHEBI:57865"/>
    </ligand>
</feature>
<feature type="binding site" evidence="1">
    <location>
        <position position="145"/>
    </location>
    <ligand>
        <name>ATP</name>
        <dbReference type="ChEBI" id="CHEBI:30616"/>
    </ligand>
</feature>
<feature type="binding site" evidence="1">
    <location>
        <position position="149"/>
    </location>
    <ligand>
        <name>ATP</name>
        <dbReference type="ChEBI" id="CHEBI:30616"/>
    </ligand>
</feature>
<feature type="binding site" evidence="1">
    <location>
        <position position="165"/>
    </location>
    <ligand>
        <name>UMP</name>
        <dbReference type="ChEBI" id="CHEBI:57865"/>
    </ligand>
</feature>
<feature type="binding site" evidence="1">
    <location>
        <begin position="180"/>
        <end position="184"/>
    </location>
    <ligand>
        <name>ATP</name>
        <dbReference type="ChEBI" id="CHEBI:30616"/>
    </ligand>
</feature>
<feature type="binding site" evidence="1">
    <location>
        <begin position="189"/>
        <end position="191"/>
    </location>
    <ligand>
        <name>ATP</name>
        <dbReference type="ChEBI" id="CHEBI:30616"/>
    </ligand>
</feature>
<feature type="binding site" evidence="1">
    <location>
        <begin position="226"/>
        <end position="233"/>
    </location>
    <ligand>
        <name>UMP</name>
        <dbReference type="ChEBI" id="CHEBI:57865"/>
    </ligand>
</feature>
<feature type="binding site" evidence="1">
    <location>
        <position position="253"/>
    </location>
    <ligand>
        <name>ATP</name>
        <dbReference type="ChEBI" id="CHEBI:30616"/>
    </ligand>
</feature>
<feature type="binding site" evidence="1">
    <location>
        <position position="259"/>
    </location>
    <ligand>
        <name>ATP</name>
        <dbReference type="ChEBI" id="CHEBI:30616"/>
    </ligand>
</feature>
<feature type="binding site" evidence="1">
    <location>
        <position position="262"/>
    </location>
    <ligand>
        <name>ATP</name>
        <dbReference type="ChEBI" id="CHEBI:30616"/>
    </ligand>
</feature>
<reference key="1">
    <citation type="journal article" date="2000" name="DNA Res.">
        <title>Structural analysis of Arabidopsis thaliana chromosome 3. I. Sequence features of the regions of 4,504,864 bp covered by sixty P1 and TAC clones.</title>
        <authorList>
            <person name="Sato S."/>
            <person name="Nakamura Y."/>
            <person name="Kaneko T."/>
            <person name="Katoh T."/>
            <person name="Asamizu E."/>
            <person name="Tabata S."/>
        </authorList>
    </citation>
    <scope>NUCLEOTIDE SEQUENCE [LARGE SCALE GENOMIC DNA]</scope>
    <source>
        <strain>cv. Columbia</strain>
    </source>
</reference>
<reference key="2">
    <citation type="journal article" date="2017" name="Plant J.">
        <title>Araport11: a complete reannotation of the Arabidopsis thaliana reference genome.</title>
        <authorList>
            <person name="Cheng C.Y."/>
            <person name="Krishnakumar V."/>
            <person name="Chan A.P."/>
            <person name="Thibaud-Nissen F."/>
            <person name="Schobel S."/>
            <person name="Town C.D."/>
        </authorList>
    </citation>
    <scope>GENOME REANNOTATION</scope>
    <source>
        <strain>cv. Columbia</strain>
    </source>
</reference>
<reference key="3">
    <citation type="journal article" date="2003" name="Science">
        <title>Empirical analysis of transcriptional activity in the Arabidopsis genome.</title>
        <authorList>
            <person name="Yamada K."/>
            <person name="Lim J."/>
            <person name="Dale J.M."/>
            <person name="Chen H."/>
            <person name="Shinn P."/>
            <person name="Palm C.J."/>
            <person name="Southwick A.M."/>
            <person name="Wu H.C."/>
            <person name="Kim C.J."/>
            <person name="Nguyen M."/>
            <person name="Pham P.K."/>
            <person name="Cheuk R.F."/>
            <person name="Karlin-Newmann G."/>
            <person name="Liu S.X."/>
            <person name="Lam B."/>
            <person name="Sakano H."/>
            <person name="Wu T."/>
            <person name="Yu G."/>
            <person name="Miranda M."/>
            <person name="Quach H.L."/>
            <person name="Tripp M."/>
            <person name="Chang C.H."/>
            <person name="Lee J.M."/>
            <person name="Toriumi M.J."/>
            <person name="Chan M.M."/>
            <person name="Tang C.C."/>
            <person name="Onodera C.S."/>
            <person name="Deng J.M."/>
            <person name="Akiyama K."/>
            <person name="Ansari Y."/>
            <person name="Arakawa T."/>
            <person name="Banh J."/>
            <person name="Banno F."/>
            <person name="Bowser L."/>
            <person name="Brooks S.Y."/>
            <person name="Carninci P."/>
            <person name="Chao Q."/>
            <person name="Choy N."/>
            <person name="Enju A."/>
            <person name="Goldsmith A.D."/>
            <person name="Gurjal M."/>
            <person name="Hansen N.F."/>
            <person name="Hayashizaki Y."/>
            <person name="Johnson-Hopson C."/>
            <person name="Hsuan V.W."/>
            <person name="Iida K."/>
            <person name="Karnes M."/>
            <person name="Khan S."/>
            <person name="Koesema E."/>
            <person name="Ishida J."/>
            <person name="Jiang P.X."/>
            <person name="Jones T."/>
            <person name="Kawai J."/>
            <person name="Kamiya A."/>
            <person name="Meyers C."/>
            <person name="Nakajima M."/>
            <person name="Narusaka M."/>
            <person name="Seki M."/>
            <person name="Sakurai T."/>
            <person name="Satou M."/>
            <person name="Tamse R."/>
            <person name="Vaysberg M."/>
            <person name="Wallender E.K."/>
            <person name="Wong C."/>
            <person name="Yamamura Y."/>
            <person name="Yuan S."/>
            <person name="Shinozaki K."/>
            <person name="Davis R.W."/>
            <person name="Theologis A."/>
            <person name="Ecker J.R."/>
        </authorList>
    </citation>
    <scope>NUCLEOTIDE SEQUENCE [LARGE SCALE MRNA]</scope>
    <source>
        <strain>cv. Columbia</strain>
    </source>
</reference>
<reference key="4">
    <citation type="journal article" date="2009" name="Plant Mol. Biol.">
        <title>A protein related to prokaryotic UMP kinases is involved in psaA/B transcript accumulation in Arabidopsis.</title>
        <authorList>
            <person name="Hein P."/>
            <person name="Stoeckel J."/>
            <person name="Bennewitz S."/>
            <person name="Oelmueller R."/>
        </authorList>
    </citation>
    <scope>FUNCTION</scope>
    <scope>DISRUPTION PHENOTYPE</scope>
    <scope>SUBCELLULAR LOCATION</scope>
    <scope>TISSUE SPECIFICITY</scope>
    <scope>INDUCTION BY LIGHT</scope>
    <source>
        <strain>cv. Columbia</strain>
        <strain>cv. Landsberg erecta</strain>
    </source>
</reference>
<reference key="5">
    <citation type="journal article" date="2009" name="Plant Physiol.">
        <title>Large-scale Arabidopsis phosphoproteome profiling reveals novel chloroplast kinase substrates and phosphorylation networks.</title>
        <authorList>
            <person name="Reiland S."/>
            <person name="Messerli G."/>
            <person name="Baerenfaller K."/>
            <person name="Gerrits B."/>
            <person name="Endler A."/>
            <person name="Grossmann J."/>
            <person name="Gruissem W."/>
            <person name="Baginsky S."/>
        </authorList>
    </citation>
    <scope>IDENTIFICATION BY MASS SPECTROMETRY [LARGE SCALE ANALYSIS]</scope>
</reference>
<reference key="6">
    <citation type="journal article" date="2019" name="Plant Physiol.">
        <title>PUMPKIN, the sole plastid UMP kinase, associates with group II introns and alters their metabolism.</title>
        <authorList>
            <person name="Schmid L.M."/>
            <person name="Ohler L."/>
            <person name="Moehlmann T."/>
            <person name="Brachmann A."/>
            <person name="Muino J.M."/>
            <person name="Leister D."/>
            <person name="Meurer J."/>
            <person name="Manavski N."/>
        </authorList>
    </citation>
    <scope>FUNCTION</scope>
    <scope>DISRUPTION PHENOTYPE</scope>
    <scope>SUBCELLULAR LOCATION</scope>
    <scope>SUBUNIT</scope>
    <scope>CATALYTIC ACTIVITY</scope>
    <scope>PATHWAY</scope>
    <scope>BIOPHYSICOCHEMICAL PROPERTIES</scope>
    <source>
        <strain>cv. Columbia</strain>
    </source>
</reference>